<proteinExistence type="evidence at protein level"/>
<comment type="function">
    <text evidence="5 6 7">Involved in the plastidial phosphorylated pathway of serine biosynthesis (PPSB).</text>
</comment>
<comment type="catalytic activity">
    <reaction evidence="6 7">
        <text>(2R)-3-phosphoglycerate + NAD(+) = 3-phosphooxypyruvate + NADH + H(+)</text>
        <dbReference type="Rhea" id="RHEA:12641"/>
        <dbReference type="ChEBI" id="CHEBI:15378"/>
        <dbReference type="ChEBI" id="CHEBI:18110"/>
        <dbReference type="ChEBI" id="CHEBI:57540"/>
        <dbReference type="ChEBI" id="CHEBI:57945"/>
        <dbReference type="ChEBI" id="CHEBI:58272"/>
        <dbReference type="EC" id="1.1.1.95"/>
    </reaction>
</comment>
<comment type="activity regulation">
    <text evidence="6 7">Inhibited by 90 uM 3-phosphonooxypyruvate, but not by Ser, Thr, Val, Gly Trp, O-acetyl-L-Ser and Cys.</text>
</comment>
<comment type="biophysicochemical properties">
    <kinetics>
        <KM evidence="6 7">1.926 mM for 3-phospho-D-glycerate (at pH 7.2)</KM>
        <KM evidence="6 7">0.899 mM for 3-phospho-D-glycerate (at pH 8.1)</KM>
        <KM evidence="6 7">1.19 mM for 3-phospho-D-glycerate (at pH 9.0)</KM>
        <KM evidence="6 7">0.271 mM for NAD(+) (at pH 7.2)</KM>
        <KM evidence="6 7">0.189 mM for NAD(+) (at pH 8.1)</KM>
        <KM evidence="6 7">0.01 mM for NAD(+) (at pH 9.0)</KM>
        <KM evidence="6 7">0.35 mM for 3-phosphonooxypyruvate (at pH 7.1)</KM>
        <KM evidence="6 7">0.12 mM for NADH (at pH 7.1)</KM>
        <Vmax evidence="6 7">133.0 umol/min/mg enzyme (at pH 8.1)</Vmax>
        <Vmax evidence="6 7">108.0 umol/min/mg enzyme (at pH 7.2)</Vmax>
    </kinetics>
</comment>
<comment type="pathway">
    <text>Amino-acid biosynthesis; L-serine biosynthesis; L-serine from 3-phospho-D-glycerate: step 1/3.</text>
</comment>
<comment type="subcellular location">
    <subcellularLocation>
        <location evidence="5 6 7">Plastid</location>
        <location evidence="5 6 7">Chloroplast</location>
    </subcellularLocation>
</comment>
<comment type="alternative products">
    <event type="alternative splicing"/>
    <isoform>
        <id>O04130-1</id>
        <name>1</name>
        <sequence type="displayed"/>
    </isoform>
    <isoform>
        <id>O04130-2</id>
        <name>2</name>
        <sequence type="described" ref="VSP_055873"/>
    </isoform>
</comment>
<comment type="tissue specificity">
    <text evidence="5 6 7">Ubiquitous, but highly expressed in roots and in dark-grown leaf tissues. Expressed in the vasculature, stigma, anther filaments and shoot apical meristem. Not detected in the root meristem or in embryo.</text>
</comment>
<comment type="induction">
    <text evidence="6">Not regulated by high CO(2) levels. Up-regulated upon necrotrophic pathogen infection.</text>
</comment>
<comment type="disruption phenotype">
    <text evidence="5 6">No visible phenotype.</text>
</comment>
<comment type="similarity">
    <text evidence="8">Belongs to the D-isomer specific 2-hydroxyacid dehydrogenase family.</text>
</comment>
<feature type="transit peptide" description="Chloroplast" evidence="3">
    <location>
        <begin position="1"/>
        <end position="49"/>
    </location>
</feature>
<feature type="chain" id="PRO_0000007192" description="D-3-phosphoglycerate dehydrogenase 2, chloroplastic">
    <location>
        <begin position="50"/>
        <end position="624"/>
    </location>
</feature>
<feature type="domain" description="ACT" evidence="4">
    <location>
        <begin position="552"/>
        <end position="624"/>
    </location>
</feature>
<feature type="active site" evidence="1">
    <location>
        <position position="312"/>
    </location>
</feature>
<feature type="active site" evidence="1">
    <location>
        <position position="341"/>
    </location>
</feature>
<feature type="active site" description="Proton donor" evidence="1">
    <location>
        <position position="360"/>
    </location>
</feature>
<feature type="binding site" evidence="2">
    <location>
        <begin position="231"/>
        <end position="232"/>
    </location>
    <ligand>
        <name>NAD(+)</name>
        <dbReference type="ChEBI" id="CHEBI:57540"/>
    </ligand>
</feature>
<feature type="binding site" evidence="2">
    <location>
        <position position="251"/>
    </location>
    <ligand>
        <name>NAD(+)</name>
        <dbReference type="ChEBI" id="CHEBI:57540"/>
    </ligand>
</feature>
<feature type="binding site" evidence="2">
    <location>
        <begin position="310"/>
        <end position="312"/>
    </location>
    <ligand>
        <name>NAD(+)</name>
        <dbReference type="ChEBI" id="CHEBI:57540"/>
    </ligand>
</feature>
<feature type="binding site" evidence="2">
    <location>
        <position position="336"/>
    </location>
    <ligand>
        <name>NAD(+)</name>
        <dbReference type="ChEBI" id="CHEBI:57540"/>
    </ligand>
</feature>
<feature type="binding site" evidence="2">
    <location>
        <begin position="360"/>
        <end position="363"/>
    </location>
    <ligand>
        <name>NAD(+)</name>
        <dbReference type="ChEBI" id="CHEBI:57540"/>
    </ligand>
</feature>
<feature type="modified residue" description="Phosphoserine" evidence="9">
    <location>
        <position position="71"/>
    </location>
</feature>
<feature type="splice variant" id="VSP_055873" description="In isoform 2." evidence="8">
    <original>KWE</original>
    <variation>TLNYLFLVLLLRWNCRQSKHQYTIETETEK</variation>
    <location>
        <begin position="208"/>
        <end position="210"/>
    </location>
</feature>
<name>SERA2_ARATH</name>
<accession>O04130</accession>
<accession>F4I918</accession>
<keyword id="KW-0025">Alternative splicing</keyword>
<keyword id="KW-0028">Amino-acid biosynthesis</keyword>
<keyword id="KW-0150">Chloroplast</keyword>
<keyword id="KW-0520">NAD</keyword>
<keyword id="KW-0560">Oxidoreductase</keyword>
<keyword id="KW-0597">Phosphoprotein</keyword>
<keyword id="KW-0934">Plastid</keyword>
<keyword id="KW-1185">Reference proteome</keyword>
<keyword id="KW-0718">Serine biosynthesis</keyword>
<keyword id="KW-0809">Transit peptide</keyword>
<dbReference type="EC" id="1.1.1.95" evidence="6 7"/>
<dbReference type="EMBL" id="AB003280">
    <property type="protein sequence ID" value="BAA20405.1"/>
    <property type="molecule type" value="mRNA"/>
</dbReference>
<dbReference type="EMBL" id="AB010407">
    <property type="protein sequence ID" value="BAA24440.1"/>
    <property type="molecule type" value="Genomic_DNA"/>
</dbReference>
<dbReference type="EMBL" id="AC034257">
    <property type="protein sequence ID" value="AAF99816.1"/>
    <property type="molecule type" value="Genomic_DNA"/>
</dbReference>
<dbReference type="EMBL" id="CP002684">
    <property type="protein sequence ID" value="AEE29630.1"/>
    <property type="molecule type" value="Genomic_DNA"/>
</dbReference>
<dbReference type="EMBL" id="CP002684">
    <property type="protein sequence ID" value="AEE29631.1"/>
    <property type="molecule type" value="Genomic_DNA"/>
</dbReference>
<dbReference type="EMBL" id="AY050399">
    <property type="protein sequence ID" value="AAK91415.1"/>
    <property type="molecule type" value="mRNA"/>
</dbReference>
<dbReference type="EMBL" id="AY098953">
    <property type="protein sequence ID" value="AAM19963.1"/>
    <property type="molecule type" value="mRNA"/>
</dbReference>
<dbReference type="EMBL" id="AY086001">
    <property type="protein sequence ID" value="AAM63210.1"/>
    <property type="molecule type" value="mRNA"/>
</dbReference>
<dbReference type="PIR" id="T52296">
    <property type="entry name" value="T52296"/>
</dbReference>
<dbReference type="RefSeq" id="NP_001031061.2">
    <molecule id="O04130-2"/>
    <property type="nucleotide sequence ID" value="NM_001035984.2"/>
</dbReference>
<dbReference type="RefSeq" id="NP_564034.1">
    <molecule id="O04130-1"/>
    <property type="nucleotide sequence ID" value="NM_101636.3"/>
</dbReference>
<dbReference type="SMR" id="O04130"/>
<dbReference type="BioGRID" id="23591">
    <property type="interactions" value="12"/>
</dbReference>
<dbReference type="FunCoup" id="O04130">
    <property type="interactions" value="1927"/>
</dbReference>
<dbReference type="IntAct" id="O04130">
    <property type="interactions" value="2"/>
</dbReference>
<dbReference type="STRING" id="3702.O04130"/>
<dbReference type="iPTMnet" id="O04130"/>
<dbReference type="PaxDb" id="3702-AT1G17745.2"/>
<dbReference type="ProteomicsDB" id="232830">
    <molecule id="O04130-1"/>
</dbReference>
<dbReference type="EnsemblPlants" id="AT1G17745.1">
    <molecule id="O04130-1"/>
    <property type="protein sequence ID" value="AT1G17745.1"/>
    <property type="gene ID" value="AT1G17745"/>
</dbReference>
<dbReference type="EnsemblPlants" id="AT1G17745.2">
    <molecule id="O04130-2"/>
    <property type="protein sequence ID" value="AT1G17745.2"/>
    <property type="gene ID" value="AT1G17745"/>
</dbReference>
<dbReference type="GeneID" id="838352"/>
<dbReference type="Gramene" id="AT1G17745.1">
    <molecule id="O04130-1"/>
    <property type="protein sequence ID" value="AT1G17745.1"/>
    <property type="gene ID" value="AT1G17745"/>
</dbReference>
<dbReference type="Gramene" id="AT1G17745.2">
    <molecule id="O04130-2"/>
    <property type="protein sequence ID" value="AT1G17745.2"/>
    <property type="gene ID" value="AT1G17745"/>
</dbReference>
<dbReference type="KEGG" id="ath:AT1G17745"/>
<dbReference type="Araport" id="AT1G17745"/>
<dbReference type="TAIR" id="AT1G17745">
    <property type="gene designation" value="PGDH"/>
</dbReference>
<dbReference type="eggNOG" id="KOG0068">
    <property type="taxonomic scope" value="Eukaryota"/>
</dbReference>
<dbReference type="HOGENOM" id="CLU_019796_8_1_1"/>
<dbReference type="InParanoid" id="O04130"/>
<dbReference type="OMA" id="NLECAYN"/>
<dbReference type="OrthoDB" id="298012at2759"/>
<dbReference type="PhylomeDB" id="O04130"/>
<dbReference type="BioCyc" id="ARA:AT1G17745-MONOMER"/>
<dbReference type="BioCyc" id="MetaCyc:AT1G17745-MONOMER"/>
<dbReference type="BRENDA" id="1.1.1.95">
    <property type="organism ID" value="399"/>
</dbReference>
<dbReference type="SABIO-RK" id="O04130"/>
<dbReference type="UniPathway" id="UPA00135">
    <property type="reaction ID" value="UER00196"/>
</dbReference>
<dbReference type="CD-CODE" id="4299E36E">
    <property type="entry name" value="Nucleolus"/>
</dbReference>
<dbReference type="PRO" id="PR:O04130"/>
<dbReference type="Proteomes" id="UP000006548">
    <property type="component" value="Chromosome 1"/>
</dbReference>
<dbReference type="ExpressionAtlas" id="O04130">
    <property type="expression patterns" value="baseline and differential"/>
</dbReference>
<dbReference type="GO" id="GO:0009507">
    <property type="term" value="C:chloroplast"/>
    <property type="evidence" value="ECO:0007005"/>
    <property type="project" value="TAIR"/>
</dbReference>
<dbReference type="GO" id="GO:0009570">
    <property type="term" value="C:chloroplast stroma"/>
    <property type="evidence" value="ECO:0007005"/>
    <property type="project" value="TAIR"/>
</dbReference>
<dbReference type="GO" id="GO:0005634">
    <property type="term" value="C:nucleus"/>
    <property type="evidence" value="ECO:0007005"/>
    <property type="project" value="TAIR"/>
</dbReference>
<dbReference type="GO" id="GO:0051287">
    <property type="term" value="F:NAD binding"/>
    <property type="evidence" value="ECO:0007669"/>
    <property type="project" value="InterPro"/>
</dbReference>
<dbReference type="GO" id="GO:0004617">
    <property type="term" value="F:phosphoglycerate dehydrogenase activity"/>
    <property type="evidence" value="ECO:0007669"/>
    <property type="project" value="UniProtKB-EC"/>
</dbReference>
<dbReference type="GO" id="GO:0006564">
    <property type="term" value="P:L-serine biosynthetic process"/>
    <property type="evidence" value="ECO:0007669"/>
    <property type="project" value="UniProtKB-KW"/>
</dbReference>
<dbReference type="CDD" id="cd04902">
    <property type="entry name" value="ACT_3PGDH-xct"/>
    <property type="match status" value="1"/>
</dbReference>
<dbReference type="CDD" id="cd12173">
    <property type="entry name" value="PGDH_4"/>
    <property type="match status" value="1"/>
</dbReference>
<dbReference type="FunFam" id="3.30.1330.90:FF:000003">
    <property type="entry name" value="D-3-phosphoglycerate dehydrogenase"/>
    <property type="match status" value="1"/>
</dbReference>
<dbReference type="FunFam" id="3.40.50.720:FF:000021">
    <property type="entry name" value="D-3-phosphoglycerate dehydrogenase"/>
    <property type="match status" value="1"/>
</dbReference>
<dbReference type="FunFam" id="3.40.50.720:FF:000616">
    <property type="entry name" value="D-3-phosphoglycerate dehydrogenase 2 chloroplastic"/>
    <property type="match status" value="1"/>
</dbReference>
<dbReference type="FunFam" id="3.30.70.260:FF:000008">
    <property type="entry name" value="D-3-phosphoglycerate dehydrogenase, chloroplastic"/>
    <property type="match status" value="1"/>
</dbReference>
<dbReference type="Gene3D" id="3.30.70.260">
    <property type="match status" value="1"/>
</dbReference>
<dbReference type="Gene3D" id="3.30.1330.90">
    <property type="entry name" value="D-3-phosphoglycerate dehydrogenase, domain 3"/>
    <property type="match status" value="1"/>
</dbReference>
<dbReference type="Gene3D" id="3.40.50.720">
    <property type="entry name" value="NAD(P)-binding Rossmann-like Domain"/>
    <property type="match status" value="2"/>
</dbReference>
<dbReference type="InterPro" id="IPR045865">
    <property type="entry name" value="ACT-like_dom_sf"/>
</dbReference>
<dbReference type="InterPro" id="IPR002912">
    <property type="entry name" value="ACT_dom"/>
</dbReference>
<dbReference type="InterPro" id="IPR029009">
    <property type="entry name" value="ASB_dom_sf"/>
</dbReference>
<dbReference type="InterPro" id="IPR006139">
    <property type="entry name" value="D-isomer_2_OHA_DH_cat_dom"/>
</dbReference>
<dbReference type="InterPro" id="IPR029753">
    <property type="entry name" value="D-isomer_DH_CS"/>
</dbReference>
<dbReference type="InterPro" id="IPR029752">
    <property type="entry name" value="D-isomer_DH_CS1"/>
</dbReference>
<dbReference type="InterPro" id="IPR006140">
    <property type="entry name" value="D-isomer_DH_NAD-bd"/>
</dbReference>
<dbReference type="InterPro" id="IPR036291">
    <property type="entry name" value="NAD(P)-bd_dom_sf"/>
</dbReference>
<dbReference type="InterPro" id="IPR006236">
    <property type="entry name" value="PGDH"/>
</dbReference>
<dbReference type="InterPro" id="IPR045626">
    <property type="entry name" value="PGDH_ASB_dom"/>
</dbReference>
<dbReference type="NCBIfam" id="TIGR01327">
    <property type="entry name" value="PGDH"/>
    <property type="match status" value="1"/>
</dbReference>
<dbReference type="PANTHER" id="PTHR42938:SF46">
    <property type="entry name" value="D-3-PHOSPHOGLYCERATE DEHYDROGENASE 2, CHLOROPLASTIC"/>
    <property type="match status" value="1"/>
</dbReference>
<dbReference type="PANTHER" id="PTHR42938">
    <property type="entry name" value="FORMATE DEHYDROGENASE 1"/>
    <property type="match status" value="1"/>
</dbReference>
<dbReference type="Pfam" id="PF00389">
    <property type="entry name" value="2-Hacid_dh"/>
    <property type="match status" value="1"/>
</dbReference>
<dbReference type="Pfam" id="PF02826">
    <property type="entry name" value="2-Hacid_dh_C"/>
    <property type="match status" value="1"/>
</dbReference>
<dbReference type="Pfam" id="PF01842">
    <property type="entry name" value="ACT"/>
    <property type="match status" value="1"/>
</dbReference>
<dbReference type="Pfam" id="PF19304">
    <property type="entry name" value="PGDH_inter"/>
    <property type="match status" value="1"/>
</dbReference>
<dbReference type="SUPFAM" id="SSF55021">
    <property type="entry name" value="ACT-like"/>
    <property type="match status" value="1"/>
</dbReference>
<dbReference type="SUPFAM" id="SSF52283">
    <property type="entry name" value="Formate/glycerate dehydrogenase catalytic domain-like"/>
    <property type="match status" value="1"/>
</dbReference>
<dbReference type="SUPFAM" id="SSF51735">
    <property type="entry name" value="NAD(P)-binding Rossmann-fold domains"/>
    <property type="match status" value="1"/>
</dbReference>
<dbReference type="SUPFAM" id="SSF143548">
    <property type="entry name" value="Serine metabolism enzymes domain"/>
    <property type="match status" value="1"/>
</dbReference>
<dbReference type="PROSITE" id="PS51671">
    <property type="entry name" value="ACT"/>
    <property type="match status" value="1"/>
</dbReference>
<dbReference type="PROSITE" id="PS00065">
    <property type="entry name" value="D_2_HYDROXYACID_DH_1"/>
    <property type="match status" value="1"/>
</dbReference>
<dbReference type="PROSITE" id="PS00670">
    <property type="entry name" value="D_2_HYDROXYACID_DH_2"/>
    <property type="match status" value="1"/>
</dbReference>
<dbReference type="PROSITE" id="PS00671">
    <property type="entry name" value="D_2_HYDROXYACID_DH_3"/>
    <property type="match status" value="1"/>
</dbReference>
<evidence type="ECO:0000250" key="1"/>
<evidence type="ECO:0000250" key="2">
    <source>
        <dbReference type="UniProtKB" id="P0A9T0"/>
    </source>
</evidence>
<evidence type="ECO:0000255" key="3"/>
<evidence type="ECO:0000255" key="4">
    <source>
        <dbReference type="PROSITE-ProRule" id="PRU01007"/>
    </source>
</evidence>
<evidence type="ECO:0000269" key="5">
    <source>
    </source>
</evidence>
<evidence type="ECO:0000269" key="6">
    <source>
    </source>
</evidence>
<evidence type="ECO:0000269" key="7">
    <source>
    </source>
</evidence>
<evidence type="ECO:0000305" key="8"/>
<evidence type="ECO:0007744" key="9">
    <source>
    </source>
</evidence>
<sequence length="624" mass="66454">MAFSSSCSSVKAVNSRWTSPSPSPSSRFAVLPAFLHRRYATSVKLTAISAALKTVEQTTLTEDNRFSTVGSDSDEYNPTLPKPRILVTEKLGEAGVNLLREFGDVDCSYDLSPEDLKKKVAESDALIVRSGTKVTREVFEAAKGRLKVVGRAGVGIDNVDLQAATEHGCLVVNAPTANTVAAAEHGIALLASMARNVAQADASIKAGKWERSKYVGVSLVGKTLAVMGFGKVGTEVARRAKGLGMTVISHDPYAPADRARALGVDLVSFDQAISTADFVSLHMPLTPATKKVFNDETFSKMKKGVRLINVARGGVIDEDALVRALDAGIVAQAALDVFCEEPPSKDSRLIQHENVTVTPHLGASTKEAQEGVAIEIAEAVAGALKGELSATAVNAPMVAPEVLSELTPYIVLAEKLGRLAVQLASGGKGVQSIRVVYRSARDRDDLDTRLLRAMITKGIIEPISDSYVNLVNADFIAKQKGLRISEERMVVDSSPEYPVDSIQVQILNVESNFAGAVSDAGDISIEGKVKYGVPHLTCVGSFGVDVSLEGNLILCRQVDQPGMIGQVGNILGEQNVNVNFMSVGRTVLRKQAIMAIGVDEEPDNKTLERIGGVSAIEEFVFLKL</sequence>
<protein>
    <recommendedName>
        <fullName>D-3-phosphoglycerate dehydrogenase 2, chloroplastic</fullName>
        <shortName>PGDH</shortName>
        <ecNumber evidence="6 7">1.1.1.95</ecNumber>
    </recommendedName>
</protein>
<gene>
    <name type="primary">PGDH2</name>
    <name type="synonym">3-PGDH</name>
    <name type="synonym">PGDH</name>
    <name type="ordered locus">At1g17745</name>
    <name type="ORF">F11A6.8</name>
</gene>
<organism>
    <name type="scientific">Arabidopsis thaliana</name>
    <name type="common">Mouse-ear cress</name>
    <dbReference type="NCBI Taxonomy" id="3702"/>
    <lineage>
        <taxon>Eukaryota</taxon>
        <taxon>Viridiplantae</taxon>
        <taxon>Streptophyta</taxon>
        <taxon>Embryophyta</taxon>
        <taxon>Tracheophyta</taxon>
        <taxon>Spermatophyta</taxon>
        <taxon>Magnoliopsida</taxon>
        <taxon>eudicotyledons</taxon>
        <taxon>Gunneridae</taxon>
        <taxon>Pentapetalae</taxon>
        <taxon>rosids</taxon>
        <taxon>malvids</taxon>
        <taxon>Brassicales</taxon>
        <taxon>Brassicaceae</taxon>
        <taxon>Camelineae</taxon>
        <taxon>Arabidopsis</taxon>
    </lineage>
</organism>
<reference key="1">
    <citation type="journal article" date="1999" name="J. Biol. Chem.">
        <title>Regulation of serine biosynthesis in Arabidopsis. Crucial role of plastidic 3-phosphoglycerate dehydrogenase in non-photosynthetic tissues.</title>
        <authorList>
            <person name="Ho C.-L."/>
            <person name="Noji M."/>
            <person name="Saito M."/>
            <person name="Saito K."/>
        </authorList>
    </citation>
    <scope>NUCLEOTIDE SEQUENCE [GENOMIC DNA / MRNA] (ISOFORM 1)</scope>
    <scope>SUBCELLULAR LOCATION</scope>
    <scope>FUNCTION</scope>
    <scope>CATALYTIC ACTIVITY</scope>
    <scope>BIOPHYSICOCHEMICAL PROPERTIES</scope>
    <scope>ACTIVITY REGULATION</scope>
    <scope>TISSUE SPECIFICITY</scope>
    <source>
        <strain>cv. Columbia</strain>
    </source>
</reference>
<reference key="2">
    <citation type="journal article" date="2000" name="Nature">
        <title>Sequence and analysis of chromosome 1 of the plant Arabidopsis thaliana.</title>
        <authorList>
            <person name="Theologis A."/>
            <person name="Ecker J.R."/>
            <person name="Palm C.J."/>
            <person name="Federspiel N.A."/>
            <person name="Kaul S."/>
            <person name="White O."/>
            <person name="Alonso J."/>
            <person name="Altafi H."/>
            <person name="Araujo R."/>
            <person name="Bowman C.L."/>
            <person name="Brooks S.Y."/>
            <person name="Buehler E."/>
            <person name="Chan A."/>
            <person name="Chao Q."/>
            <person name="Chen H."/>
            <person name="Cheuk R.F."/>
            <person name="Chin C.W."/>
            <person name="Chung M.K."/>
            <person name="Conn L."/>
            <person name="Conway A.B."/>
            <person name="Conway A.R."/>
            <person name="Creasy T.H."/>
            <person name="Dewar K."/>
            <person name="Dunn P."/>
            <person name="Etgu P."/>
            <person name="Feldblyum T.V."/>
            <person name="Feng J.-D."/>
            <person name="Fong B."/>
            <person name="Fujii C.Y."/>
            <person name="Gill J.E."/>
            <person name="Goldsmith A.D."/>
            <person name="Haas B."/>
            <person name="Hansen N.F."/>
            <person name="Hughes B."/>
            <person name="Huizar L."/>
            <person name="Hunter J.L."/>
            <person name="Jenkins J."/>
            <person name="Johnson-Hopson C."/>
            <person name="Khan S."/>
            <person name="Khaykin E."/>
            <person name="Kim C.J."/>
            <person name="Koo H.L."/>
            <person name="Kremenetskaia I."/>
            <person name="Kurtz D.B."/>
            <person name="Kwan A."/>
            <person name="Lam B."/>
            <person name="Langin-Hooper S."/>
            <person name="Lee A."/>
            <person name="Lee J.M."/>
            <person name="Lenz C.A."/>
            <person name="Li J.H."/>
            <person name="Li Y.-P."/>
            <person name="Lin X."/>
            <person name="Liu S.X."/>
            <person name="Liu Z.A."/>
            <person name="Luros J.S."/>
            <person name="Maiti R."/>
            <person name="Marziali A."/>
            <person name="Militscher J."/>
            <person name="Miranda M."/>
            <person name="Nguyen M."/>
            <person name="Nierman W.C."/>
            <person name="Osborne B.I."/>
            <person name="Pai G."/>
            <person name="Peterson J."/>
            <person name="Pham P.K."/>
            <person name="Rizzo M."/>
            <person name="Rooney T."/>
            <person name="Rowley D."/>
            <person name="Sakano H."/>
            <person name="Salzberg S.L."/>
            <person name="Schwartz J.R."/>
            <person name="Shinn P."/>
            <person name="Southwick A.M."/>
            <person name="Sun H."/>
            <person name="Tallon L.J."/>
            <person name="Tambunga G."/>
            <person name="Toriumi M.J."/>
            <person name="Town C.D."/>
            <person name="Utterback T."/>
            <person name="Van Aken S."/>
            <person name="Vaysberg M."/>
            <person name="Vysotskaia V.S."/>
            <person name="Walker M."/>
            <person name="Wu D."/>
            <person name="Yu G."/>
            <person name="Fraser C.M."/>
            <person name="Venter J.C."/>
            <person name="Davis R.W."/>
        </authorList>
    </citation>
    <scope>NUCLEOTIDE SEQUENCE [LARGE SCALE GENOMIC DNA]</scope>
    <source>
        <strain>cv. Columbia</strain>
    </source>
</reference>
<reference key="3">
    <citation type="journal article" date="2017" name="Plant J.">
        <title>Araport11: a complete reannotation of the Arabidopsis thaliana reference genome.</title>
        <authorList>
            <person name="Cheng C.Y."/>
            <person name="Krishnakumar V."/>
            <person name="Chan A.P."/>
            <person name="Thibaud-Nissen F."/>
            <person name="Schobel S."/>
            <person name="Town C.D."/>
        </authorList>
    </citation>
    <scope>GENOME REANNOTATION</scope>
    <source>
        <strain>cv. Columbia</strain>
    </source>
</reference>
<reference key="4">
    <citation type="journal article" date="2003" name="Science">
        <title>Empirical analysis of transcriptional activity in the Arabidopsis genome.</title>
        <authorList>
            <person name="Yamada K."/>
            <person name="Lim J."/>
            <person name="Dale J.M."/>
            <person name="Chen H."/>
            <person name="Shinn P."/>
            <person name="Palm C.J."/>
            <person name="Southwick A.M."/>
            <person name="Wu H.C."/>
            <person name="Kim C.J."/>
            <person name="Nguyen M."/>
            <person name="Pham P.K."/>
            <person name="Cheuk R.F."/>
            <person name="Karlin-Newmann G."/>
            <person name="Liu S.X."/>
            <person name="Lam B."/>
            <person name="Sakano H."/>
            <person name="Wu T."/>
            <person name="Yu G."/>
            <person name="Miranda M."/>
            <person name="Quach H.L."/>
            <person name="Tripp M."/>
            <person name="Chang C.H."/>
            <person name="Lee J.M."/>
            <person name="Toriumi M.J."/>
            <person name="Chan M.M."/>
            <person name="Tang C.C."/>
            <person name="Onodera C.S."/>
            <person name="Deng J.M."/>
            <person name="Akiyama K."/>
            <person name="Ansari Y."/>
            <person name="Arakawa T."/>
            <person name="Banh J."/>
            <person name="Banno F."/>
            <person name="Bowser L."/>
            <person name="Brooks S.Y."/>
            <person name="Carninci P."/>
            <person name="Chao Q."/>
            <person name="Choy N."/>
            <person name="Enju A."/>
            <person name="Goldsmith A.D."/>
            <person name="Gurjal M."/>
            <person name="Hansen N.F."/>
            <person name="Hayashizaki Y."/>
            <person name="Johnson-Hopson C."/>
            <person name="Hsuan V.W."/>
            <person name="Iida K."/>
            <person name="Karnes M."/>
            <person name="Khan S."/>
            <person name="Koesema E."/>
            <person name="Ishida J."/>
            <person name="Jiang P.X."/>
            <person name="Jones T."/>
            <person name="Kawai J."/>
            <person name="Kamiya A."/>
            <person name="Meyers C."/>
            <person name="Nakajima M."/>
            <person name="Narusaka M."/>
            <person name="Seki M."/>
            <person name="Sakurai T."/>
            <person name="Satou M."/>
            <person name="Tamse R."/>
            <person name="Vaysberg M."/>
            <person name="Wallender E.K."/>
            <person name="Wong C."/>
            <person name="Yamamura Y."/>
            <person name="Yuan S."/>
            <person name="Shinozaki K."/>
            <person name="Davis R.W."/>
            <person name="Theologis A."/>
            <person name="Ecker J.R."/>
        </authorList>
    </citation>
    <scope>NUCLEOTIDE SEQUENCE [LARGE SCALE MRNA] (ISOFORM 1)</scope>
    <source>
        <strain>cv. Columbia</strain>
    </source>
</reference>
<reference key="5">
    <citation type="submission" date="2002-03" db="EMBL/GenBank/DDBJ databases">
        <title>Full-length cDNA from Arabidopsis thaliana.</title>
        <authorList>
            <person name="Brover V.V."/>
            <person name="Troukhan M.E."/>
            <person name="Alexandrov N.A."/>
            <person name="Lu Y.-P."/>
            <person name="Flavell R.B."/>
            <person name="Feldmann K.A."/>
        </authorList>
    </citation>
    <scope>NUCLEOTIDE SEQUENCE [LARGE SCALE MRNA] (ISOFORM 1)</scope>
</reference>
<reference key="6">
    <citation type="journal article" date="2007" name="Mol. Cell. Proteomics">
        <title>Multidimensional protein identification technology (MudPIT) analysis of ubiquitinated proteins in plants.</title>
        <authorList>
            <person name="Maor R."/>
            <person name="Jones A."/>
            <person name="Nuehse T.S."/>
            <person name="Studholme D.J."/>
            <person name="Peck S.C."/>
            <person name="Shirasu K."/>
        </authorList>
    </citation>
    <scope>IDENTIFICATION BY MASS SPECTROMETRY [LARGE SCALE ANALYSIS]</scope>
    <source>
        <strain>cv. Landsberg erecta</strain>
    </source>
</reference>
<reference key="7">
    <citation type="journal article" date="2008" name="J. Proteome Res.">
        <title>Site-specific phosphorylation profiling of Arabidopsis proteins by mass spectrometry and peptide chip analysis.</title>
        <authorList>
            <person name="de la Fuente van Bentem S."/>
            <person name="Anrather D."/>
            <person name="Dohnal I."/>
            <person name="Roitinger E."/>
            <person name="Csaszar E."/>
            <person name="Joore J."/>
            <person name="Buijnink J."/>
            <person name="Carreri A."/>
            <person name="Forzani C."/>
            <person name="Lorkovic Z.J."/>
            <person name="Barta A."/>
            <person name="Lecourieux D."/>
            <person name="Verhounig A."/>
            <person name="Jonak C."/>
            <person name="Hirt H."/>
        </authorList>
    </citation>
    <scope>PHOSPHORYLATION [LARGE SCALE ANALYSIS] AT SER-71</scope>
    <scope>IDENTIFICATION BY MASS SPECTROMETRY [LARGE SCALE ANALYSIS]</scope>
    <source>
        <tissue>Root</tissue>
    </source>
</reference>
<reference key="8">
    <citation type="journal article" date="2009" name="J. Proteomics">
        <title>Phosphoproteomic analysis of nuclei-enriched fractions from Arabidopsis thaliana.</title>
        <authorList>
            <person name="Jones A.M.E."/>
            <person name="MacLean D."/>
            <person name="Studholme D.J."/>
            <person name="Serna-Sanz A."/>
            <person name="Andreasson E."/>
            <person name="Rathjen J.P."/>
            <person name="Peck S.C."/>
        </authorList>
    </citation>
    <scope>IDENTIFICATION BY MASS SPECTROMETRY [LARGE SCALE ANALYSIS]</scope>
    <source>
        <strain>cv. Columbia</strain>
    </source>
</reference>
<reference key="9">
    <citation type="journal article" date="2009" name="Plant Physiol.">
        <title>Large-scale Arabidopsis phosphoproteome profiling reveals novel chloroplast kinase substrates and phosphorylation networks.</title>
        <authorList>
            <person name="Reiland S."/>
            <person name="Messerli G."/>
            <person name="Baerenfaller K."/>
            <person name="Gerrits B."/>
            <person name="Endler A."/>
            <person name="Grossmann J."/>
            <person name="Gruissem W."/>
            <person name="Baginsky S."/>
        </authorList>
    </citation>
    <scope>IDENTIFICATION BY MASS SPECTROMETRY [LARGE SCALE ANALYSIS]</scope>
</reference>
<reference key="10">
    <citation type="journal article" date="2013" name="Plant Cell">
        <title>Arabidopsis phosphoglycerate dehydrogenase1 of the phosphoserine pathway is essential for development and required for ammonium assimilation and tryptophan biosynthesis.</title>
        <authorList>
            <person name="Benstein R.M."/>
            <person name="Ludewig K."/>
            <person name="Wulfert S."/>
            <person name="Wittek S."/>
            <person name="Gigolashvili T."/>
            <person name="Frerigmann H."/>
            <person name="Gierth M."/>
            <person name="Fluegge U.I."/>
            <person name="Krueger S."/>
        </authorList>
    </citation>
    <scope>FUNCTION</scope>
    <scope>CATALYTIC ACTIVITY</scope>
    <scope>BIOPHYSICOCHEMICAL PROPERTIES</scope>
    <scope>ACTIVITY REGULATION</scope>
    <scope>SUBCELLULAR LOCATION</scope>
    <scope>TISSUE SPECIFICITY</scope>
    <scope>DISRUPTION PHENOTYPE</scope>
    <scope>INDUCTION BY CO(2) AND PATHOGEN</scope>
    <source>
        <strain>cv. Columbia</strain>
    </source>
</reference>
<reference key="11">
    <citation type="journal article" date="2013" name="Plant Physiol.">
        <title>Functional characterization of the plastidial 3-phosphoglycerate dehydrogenase family in Arabidopsis.</title>
        <authorList>
            <person name="Toujani W."/>
            <person name="Munoz-Bertomeu J."/>
            <person name="Flores-Tornero M."/>
            <person name="Rosa-Tellez S."/>
            <person name="Anoman A.D."/>
            <person name="Alseekh S."/>
            <person name="Fernie A.R."/>
            <person name="Ros R."/>
        </authorList>
    </citation>
    <scope>FUNCTION</scope>
    <scope>GENE FAMILY</scope>
    <scope>NOMENCLATURE</scope>
    <scope>SUBCELLULAR LOCATION</scope>
    <scope>TISSUE SPECIFICITY</scope>
    <scope>DISRUPTION PHENOTYPE</scope>
</reference>